<name>GWL_DANRE</name>
<evidence type="ECO:0000250" key="1"/>
<evidence type="ECO:0000255" key="2">
    <source>
        <dbReference type="PROSITE-ProRule" id="PRU00159"/>
    </source>
</evidence>
<evidence type="ECO:0000255" key="3">
    <source>
        <dbReference type="PROSITE-ProRule" id="PRU00618"/>
    </source>
</evidence>
<evidence type="ECO:0000255" key="4">
    <source>
        <dbReference type="PROSITE-ProRule" id="PRU10027"/>
    </source>
</evidence>
<evidence type="ECO:0000256" key="5">
    <source>
        <dbReference type="SAM" id="MobiDB-lite"/>
    </source>
</evidence>
<evidence type="ECO:0000269" key="6">
    <source>
    </source>
</evidence>
<evidence type="ECO:0000305" key="7"/>
<proteinExistence type="evidence at transcript level"/>
<dbReference type="EC" id="2.7.11.1"/>
<dbReference type="EMBL" id="BC078324">
    <property type="protein sequence ID" value="AAH78324.1"/>
    <property type="molecule type" value="mRNA"/>
</dbReference>
<dbReference type="SMR" id="Q6DBX4"/>
<dbReference type="FunCoup" id="Q6DBX4">
    <property type="interactions" value="779"/>
</dbReference>
<dbReference type="STRING" id="7955.ENSDARP00000072407"/>
<dbReference type="PaxDb" id="7955-ENSDARP00000072407"/>
<dbReference type="AGR" id="ZFIN:ZDB-GENE-040801-128"/>
<dbReference type="ZFIN" id="ZDB-GENE-040801-128">
    <property type="gene designation" value="mastl"/>
</dbReference>
<dbReference type="eggNOG" id="KOG0606">
    <property type="taxonomic scope" value="Eukaryota"/>
</dbReference>
<dbReference type="InParanoid" id="Q6DBX4"/>
<dbReference type="PhylomeDB" id="Q6DBX4"/>
<dbReference type="Reactome" id="R-DRE-2465910">
    <property type="pathway name" value="MASTL Facilitates Mitotic Progression"/>
</dbReference>
<dbReference type="PRO" id="PR:Q6DBX4"/>
<dbReference type="Proteomes" id="UP000000437">
    <property type="component" value="Unplaced"/>
</dbReference>
<dbReference type="GO" id="GO:0005813">
    <property type="term" value="C:centrosome"/>
    <property type="evidence" value="ECO:0000250"/>
    <property type="project" value="UniProtKB"/>
</dbReference>
<dbReference type="GO" id="GO:0032154">
    <property type="term" value="C:cleavage furrow"/>
    <property type="evidence" value="ECO:0000250"/>
    <property type="project" value="UniProtKB"/>
</dbReference>
<dbReference type="GO" id="GO:0005737">
    <property type="term" value="C:cytoplasm"/>
    <property type="evidence" value="ECO:0007669"/>
    <property type="project" value="UniProtKB-KW"/>
</dbReference>
<dbReference type="GO" id="GO:0005634">
    <property type="term" value="C:nucleus"/>
    <property type="evidence" value="ECO:0000250"/>
    <property type="project" value="UniProtKB"/>
</dbReference>
<dbReference type="GO" id="GO:0005524">
    <property type="term" value="F:ATP binding"/>
    <property type="evidence" value="ECO:0007669"/>
    <property type="project" value="UniProtKB-KW"/>
</dbReference>
<dbReference type="GO" id="GO:0051721">
    <property type="term" value="F:protein phosphatase 2A binding"/>
    <property type="evidence" value="ECO:0000250"/>
    <property type="project" value="UniProtKB"/>
</dbReference>
<dbReference type="GO" id="GO:0106310">
    <property type="term" value="F:protein serine kinase activity"/>
    <property type="evidence" value="ECO:0007669"/>
    <property type="project" value="RHEA"/>
</dbReference>
<dbReference type="GO" id="GO:0004674">
    <property type="term" value="F:protein serine/threonine kinase activity"/>
    <property type="evidence" value="ECO:0000250"/>
    <property type="project" value="UniProtKB"/>
</dbReference>
<dbReference type="GO" id="GO:0051301">
    <property type="term" value="P:cell division"/>
    <property type="evidence" value="ECO:0007669"/>
    <property type="project" value="UniProtKB-KW"/>
</dbReference>
<dbReference type="GO" id="GO:0006974">
    <property type="term" value="P:DNA damage response"/>
    <property type="evidence" value="ECO:0000250"/>
    <property type="project" value="UniProtKB"/>
</dbReference>
<dbReference type="GO" id="GO:0000086">
    <property type="term" value="P:G2/M transition of mitotic cell cycle"/>
    <property type="evidence" value="ECO:0000250"/>
    <property type="project" value="UniProtKB"/>
</dbReference>
<dbReference type="GO" id="GO:0035556">
    <property type="term" value="P:intracellular signal transduction"/>
    <property type="evidence" value="ECO:0000318"/>
    <property type="project" value="GO_Central"/>
</dbReference>
<dbReference type="GO" id="GO:0000278">
    <property type="term" value="P:mitotic cell cycle"/>
    <property type="evidence" value="ECO:0000250"/>
    <property type="project" value="UniProtKB"/>
</dbReference>
<dbReference type="GO" id="GO:0030071">
    <property type="term" value="P:regulation of mitotic metaphase/anaphase transition"/>
    <property type="evidence" value="ECO:0000315"/>
    <property type="project" value="ZFIN"/>
</dbReference>
<dbReference type="GO" id="GO:0002574">
    <property type="term" value="P:thrombocyte differentiation"/>
    <property type="evidence" value="ECO:0000315"/>
    <property type="project" value="ZFIN"/>
</dbReference>
<dbReference type="FunFam" id="1.10.510.10:FF:000665">
    <property type="entry name" value="Microtubule associated serine/threonine kinase-like"/>
    <property type="match status" value="1"/>
</dbReference>
<dbReference type="FunFam" id="1.10.510.10:FF:000278">
    <property type="entry name" value="serine/threonine-protein kinase greatwall isoform X1"/>
    <property type="match status" value="1"/>
</dbReference>
<dbReference type="FunFam" id="3.30.200.20:FF:000277">
    <property type="entry name" value="serine/threonine-protein kinase greatwall isoform X1"/>
    <property type="match status" value="1"/>
</dbReference>
<dbReference type="Gene3D" id="3.30.200.20">
    <property type="entry name" value="Phosphorylase Kinase, domain 1"/>
    <property type="match status" value="2"/>
</dbReference>
<dbReference type="Gene3D" id="1.10.510.10">
    <property type="entry name" value="Transferase(Phosphotransferase) domain 1"/>
    <property type="match status" value="2"/>
</dbReference>
<dbReference type="InterPro" id="IPR000961">
    <property type="entry name" value="AGC-kinase_C"/>
</dbReference>
<dbReference type="InterPro" id="IPR011009">
    <property type="entry name" value="Kinase-like_dom_sf"/>
</dbReference>
<dbReference type="InterPro" id="IPR000719">
    <property type="entry name" value="Prot_kinase_dom"/>
</dbReference>
<dbReference type="InterPro" id="IPR008271">
    <property type="entry name" value="Ser/Thr_kinase_AS"/>
</dbReference>
<dbReference type="InterPro" id="IPR050236">
    <property type="entry name" value="Ser_Thr_kinase_AGC"/>
</dbReference>
<dbReference type="PANTHER" id="PTHR24356">
    <property type="entry name" value="SERINE/THREONINE-PROTEIN KINASE"/>
    <property type="match status" value="1"/>
</dbReference>
<dbReference type="PANTHER" id="PTHR24356:SF1">
    <property type="entry name" value="SERINE_THREONINE-PROTEIN KINASE GREATWALL"/>
    <property type="match status" value="1"/>
</dbReference>
<dbReference type="Pfam" id="PF00069">
    <property type="entry name" value="Pkinase"/>
    <property type="match status" value="2"/>
</dbReference>
<dbReference type="SMART" id="SM00220">
    <property type="entry name" value="S_TKc"/>
    <property type="match status" value="1"/>
</dbReference>
<dbReference type="SUPFAM" id="SSF56112">
    <property type="entry name" value="Protein kinase-like (PK-like)"/>
    <property type="match status" value="1"/>
</dbReference>
<dbReference type="PROSITE" id="PS51285">
    <property type="entry name" value="AGC_KINASE_CTER"/>
    <property type="match status" value="1"/>
</dbReference>
<dbReference type="PROSITE" id="PS50011">
    <property type="entry name" value="PROTEIN_KINASE_DOM"/>
    <property type="match status" value="1"/>
</dbReference>
<dbReference type="PROSITE" id="PS00108">
    <property type="entry name" value="PROTEIN_KINASE_ST"/>
    <property type="match status" value="1"/>
</dbReference>
<accession>Q6DBX4</accession>
<comment type="function">
    <text evidence="1 6">Serine/threonine kinase that plays a key role in M phase by acting as a regulator of mitosis entry and maintenance. Acts by promoting the inactivation of protein phosphatase 2A (PP2A) during M phase: does not directly inhibit PP2A but acts by mediating phosphorylation and subsequent activation of arpp19 and ensa at 'Ser-62' and 'Ser-74', respectively. ARPP19 and ENSA are phosphatase inhibitors that specifically inhibit the ppp2r2d (PR55-delta) subunit of PP2A. Inactivation of PP2A during M phase is essential to keep cyclin-B1-CDK1 activity high. Following DNA damage, it is also involved in checkpoint recovery by being inhibited (By similarity). May be involved in megakaryocyte differentiation (PubMed:19460416).</text>
</comment>
<comment type="catalytic activity">
    <reaction>
        <text>L-seryl-[protein] + ATP = O-phospho-L-seryl-[protein] + ADP + H(+)</text>
        <dbReference type="Rhea" id="RHEA:17989"/>
        <dbReference type="Rhea" id="RHEA-COMP:9863"/>
        <dbReference type="Rhea" id="RHEA-COMP:11604"/>
        <dbReference type="ChEBI" id="CHEBI:15378"/>
        <dbReference type="ChEBI" id="CHEBI:29999"/>
        <dbReference type="ChEBI" id="CHEBI:30616"/>
        <dbReference type="ChEBI" id="CHEBI:83421"/>
        <dbReference type="ChEBI" id="CHEBI:456216"/>
        <dbReference type="EC" id="2.7.11.1"/>
    </reaction>
</comment>
<comment type="catalytic activity">
    <reaction>
        <text>L-threonyl-[protein] + ATP = O-phospho-L-threonyl-[protein] + ADP + H(+)</text>
        <dbReference type="Rhea" id="RHEA:46608"/>
        <dbReference type="Rhea" id="RHEA-COMP:11060"/>
        <dbReference type="Rhea" id="RHEA-COMP:11605"/>
        <dbReference type="ChEBI" id="CHEBI:15378"/>
        <dbReference type="ChEBI" id="CHEBI:30013"/>
        <dbReference type="ChEBI" id="CHEBI:30616"/>
        <dbReference type="ChEBI" id="CHEBI:61977"/>
        <dbReference type="ChEBI" id="CHEBI:456216"/>
        <dbReference type="EC" id="2.7.11.1"/>
    </reaction>
</comment>
<comment type="subcellular location">
    <subcellularLocation>
        <location evidence="1">Cytoplasm</location>
        <location evidence="1">Cytoskeleton</location>
        <location evidence="1">Microtubule organizing center</location>
        <location evidence="1">Centrosome</location>
    </subcellularLocation>
    <subcellularLocation>
        <location evidence="6">Nucleus</location>
    </subcellularLocation>
    <subcellularLocation>
        <location evidence="1">Cleavage furrow</location>
    </subcellularLocation>
    <text evidence="1">During interphase is mainly nuclear, upon nuclear envelope breakdown localizes at the cytoplasm and during mitosis at the centrosomes (By similarity). Upon mitotic exit moves to the cleavage furrow.</text>
</comment>
<comment type="PTM">
    <text evidence="1">Phosphorylation at Thr-722 by CDK1 during M phase activates its kinase activity. Maximum phosphorylation occurs in prometaphase (By similarity).</text>
</comment>
<comment type="disruption phenotype">
    <text evidence="6">Morpholino knockdown of the protein results in reduced number of circulating thrombocytes, distinguishable at 3 days post fertilization.</text>
</comment>
<comment type="similarity">
    <text evidence="7">Belongs to the protein kinase superfamily. AGC Ser/Thr protein kinase family.</text>
</comment>
<feature type="chain" id="PRO_0000408317" description="Serine/threonine-protein kinase greatwall">
    <location>
        <begin position="1"/>
        <end position="860"/>
    </location>
</feature>
<feature type="domain" description="Protein kinase" evidence="2">
    <location>
        <begin position="23"/>
        <end position="816"/>
    </location>
</feature>
<feature type="domain" description="AGC-kinase C-terminal" evidence="3">
    <location>
        <begin position="817"/>
        <end position="860"/>
    </location>
</feature>
<feature type="region of interest" description="Disordered" evidence="5">
    <location>
        <begin position="514"/>
        <end position="537"/>
    </location>
</feature>
<feature type="active site" description="Proton acceptor" evidence="2 4">
    <location>
        <position position="146"/>
    </location>
</feature>
<feature type="binding site" evidence="2">
    <location>
        <begin position="29"/>
        <end position="37"/>
    </location>
    <ligand>
        <name>ATP</name>
        <dbReference type="ChEBI" id="CHEBI:30616"/>
    </ligand>
</feature>
<feature type="binding site" evidence="2">
    <location>
        <position position="52"/>
    </location>
    <ligand>
        <name>ATP</name>
        <dbReference type="ChEBI" id="CHEBI:30616"/>
    </ligand>
</feature>
<feature type="modified residue" description="Phosphothreonine; by CDK1" evidence="1">
    <location>
        <position position="722"/>
    </location>
</feature>
<gene>
    <name type="primary">mastl</name>
    <name type="synonym">gw</name>
    <name type="synonym">gwl</name>
</gene>
<keyword id="KW-0067">ATP-binding</keyword>
<keyword id="KW-0131">Cell cycle</keyword>
<keyword id="KW-0132">Cell division</keyword>
<keyword id="KW-0963">Cytoplasm</keyword>
<keyword id="KW-0206">Cytoskeleton</keyword>
<keyword id="KW-0418">Kinase</keyword>
<keyword id="KW-0498">Mitosis</keyword>
<keyword id="KW-0547">Nucleotide-binding</keyword>
<keyword id="KW-0539">Nucleus</keyword>
<keyword id="KW-0597">Phosphoprotein</keyword>
<keyword id="KW-1185">Reference proteome</keyword>
<keyword id="KW-0723">Serine/threonine-protein kinase</keyword>
<keyword id="KW-0808">Transferase</keyword>
<protein>
    <recommendedName>
        <fullName>Serine/threonine-protein kinase greatwall</fullName>
        <shortName>GW</shortName>
        <shortName>GWL</shortName>
        <ecNumber>2.7.11.1</ecNumber>
    </recommendedName>
    <alternativeName>
        <fullName>Microtubule-associated serine/threonine-protein kinase-like</fullName>
        <shortName>MAST-L</shortName>
    </alternativeName>
</protein>
<reference key="1">
    <citation type="submission" date="2004-07" db="EMBL/GenBank/DDBJ databases">
        <authorList>
            <consortium name="NIH - Zebrafish Gene Collection (ZGC) project"/>
        </authorList>
    </citation>
    <scope>NUCLEOTIDE SEQUENCE [LARGE SCALE MRNA]</scope>
    <source>
        <tissue>Embryo</tissue>
    </source>
</reference>
<reference key="2">
    <citation type="journal article" date="2009" name="Exp. Hematol.">
        <title>In vivo inactivation of MASTL kinase results in thrombocytopenia.</title>
        <authorList>
            <person name="Johnson H.J."/>
            <person name="Gandhi M.J."/>
            <person name="Shafizadeh E."/>
            <person name="Langer N.B."/>
            <person name="Pierce E.L."/>
            <person name="Paw B.H."/>
            <person name="Gilligan D.M."/>
            <person name="Drachman J.G."/>
        </authorList>
    </citation>
    <scope>FUNCTION</scope>
    <scope>DISRUPTION PHENOTYPE</scope>
    <scope>SUBCELLULAR LOCATION</scope>
</reference>
<organism>
    <name type="scientific">Danio rerio</name>
    <name type="common">Zebrafish</name>
    <name type="synonym">Brachydanio rerio</name>
    <dbReference type="NCBI Taxonomy" id="7955"/>
    <lineage>
        <taxon>Eukaryota</taxon>
        <taxon>Metazoa</taxon>
        <taxon>Chordata</taxon>
        <taxon>Craniata</taxon>
        <taxon>Vertebrata</taxon>
        <taxon>Euteleostomi</taxon>
        <taxon>Actinopterygii</taxon>
        <taxon>Neopterygii</taxon>
        <taxon>Teleostei</taxon>
        <taxon>Ostariophysi</taxon>
        <taxon>Cypriniformes</taxon>
        <taxon>Danionidae</taxon>
        <taxon>Danioninae</taxon>
        <taxon>Danio</taxon>
    </lineage>
</organism>
<sequence>MEARGLACESSNSAVKAPSIEDFVLVKPISRGAFGKVYLARKKCNSKLYAIKVVKKAEMVDKNMTEQMRAERDALALSKSPFIVHLFYSLQTATKVYLVMEYLIGGDVKSLLHIYGYFDEDMSLKYISEVALALDYLHRHSIIHRDLKPDNMLISNEGHIKLTDFGLSKVKLDRELNLMDILTTPSLVKPTKDYFRTPGQVLSLISSLGLNTPVIEGKRHSSTVLGSPMSCGKVKQRNRSLGSPLMKRRAEYMNSPVCTSRALASNSVFSPVLLARSLTPRLLKSGKRLDTMSVGSTHSCMLPSTTDSENCVSPMWEDEQNLHDVENIPQLNGREVDNRKSRNVPLTPVEKRKTLPARAQDHRPVFTPLNNQVTNSRNIKPDLSAKRLQFGATDNSATPLEKTVPHQSVGNGLIKPEPLKELKSSVKRAFEEVEKSPEQAEILFKKNDAAYERSFQIPEKTSRAHTGLTGIFSIVGLDDVKSAPKCQQFNERTGPKQSSPIAVAKNLFCELEDQGEEGGKAEPNSSSSTSPGDERNIRRSLSLESDVSAHEMSLVANTPQKLSDAKQEVLSSSFEELDENEISAVTPMARPTVATPKHSSAKQRRGECERSLLDHPHGLSDSMIKSPGFLKPKNVVAFRSYCSSINRSCTSHLSLASFDAMEMSASASFHNAVTPVQKKRPSLSNSLYQTPQQMVVSHTPYRTPKSVRRGPERVEGAPILGTPDYLAPELLLGKPHDFMVDWWALGVCLFEFLTGVPPFNDETPQLVFQNILNRDIPWPDGEEELTLNSRNAIEILLTMDTLKRAGLKELKDHPFFDGVDWENLHHQTMPFIPQPDNETDTSYFEARNTAQHLTVSGFSL</sequence>